<reference key="1">
    <citation type="submission" date="2001-07" db="EMBL/GenBank/DDBJ databases">
        <title>SOCS box proteins.</title>
        <authorList>
            <person name="Kile B.T."/>
            <person name="Nicola N.A."/>
        </authorList>
    </citation>
    <scope>NUCLEOTIDE SEQUENCE [MRNA]</scope>
</reference>
<reference key="2">
    <citation type="journal article" date="2005" name="Science">
        <title>The transcriptional landscape of the mammalian genome.</title>
        <authorList>
            <person name="Carninci P."/>
            <person name="Kasukawa T."/>
            <person name="Katayama S."/>
            <person name="Gough J."/>
            <person name="Frith M.C."/>
            <person name="Maeda N."/>
            <person name="Oyama R."/>
            <person name="Ravasi T."/>
            <person name="Lenhard B."/>
            <person name="Wells C."/>
            <person name="Kodzius R."/>
            <person name="Shimokawa K."/>
            <person name="Bajic V.B."/>
            <person name="Brenner S.E."/>
            <person name="Batalov S."/>
            <person name="Forrest A.R."/>
            <person name="Zavolan M."/>
            <person name="Davis M.J."/>
            <person name="Wilming L.G."/>
            <person name="Aidinis V."/>
            <person name="Allen J.E."/>
            <person name="Ambesi-Impiombato A."/>
            <person name="Apweiler R."/>
            <person name="Aturaliya R.N."/>
            <person name="Bailey T.L."/>
            <person name="Bansal M."/>
            <person name="Baxter L."/>
            <person name="Beisel K.W."/>
            <person name="Bersano T."/>
            <person name="Bono H."/>
            <person name="Chalk A.M."/>
            <person name="Chiu K.P."/>
            <person name="Choudhary V."/>
            <person name="Christoffels A."/>
            <person name="Clutterbuck D.R."/>
            <person name="Crowe M.L."/>
            <person name="Dalla E."/>
            <person name="Dalrymple B.P."/>
            <person name="de Bono B."/>
            <person name="Della Gatta G."/>
            <person name="di Bernardo D."/>
            <person name="Down T."/>
            <person name="Engstrom P."/>
            <person name="Fagiolini M."/>
            <person name="Faulkner G."/>
            <person name="Fletcher C.F."/>
            <person name="Fukushima T."/>
            <person name="Furuno M."/>
            <person name="Futaki S."/>
            <person name="Gariboldi M."/>
            <person name="Georgii-Hemming P."/>
            <person name="Gingeras T.R."/>
            <person name="Gojobori T."/>
            <person name="Green R.E."/>
            <person name="Gustincich S."/>
            <person name="Harbers M."/>
            <person name="Hayashi Y."/>
            <person name="Hensch T.K."/>
            <person name="Hirokawa N."/>
            <person name="Hill D."/>
            <person name="Huminiecki L."/>
            <person name="Iacono M."/>
            <person name="Ikeo K."/>
            <person name="Iwama A."/>
            <person name="Ishikawa T."/>
            <person name="Jakt M."/>
            <person name="Kanapin A."/>
            <person name="Katoh M."/>
            <person name="Kawasawa Y."/>
            <person name="Kelso J."/>
            <person name="Kitamura H."/>
            <person name="Kitano H."/>
            <person name="Kollias G."/>
            <person name="Krishnan S.P."/>
            <person name="Kruger A."/>
            <person name="Kummerfeld S.K."/>
            <person name="Kurochkin I.V."/>
            <person name="Lareau L.F."/>
            <person name="Lazarevic D."/>
            <person name="Lipovich L."/>
            <person name="Liu J."/>
            <person name="Liuni S."/>
            <person name="McWilliam S."/>
            <person name="Madan Babu M."/>
            <person name="Madera M."/>
            <person name="Marchionni L."/>
            <person name="Matsuda H."/>
            <person name="Matsuzawa S."/>
            <person name="Miki H."/>
            <person name="Mignone F."/>
            <person name="Miyake S."/>
            <person name="Morris K."/>
            <person name="Mottagui-Tabar S."/>
            <person name="Mulder N."/>
            <person name="Nakano N."/>
            <person name="Nakauchi H."/>
            <person name="Ng P."/>
            <person name="Nilsson R."/>
            <person name="Nishiguchi S."/>
            <person name="Nishikawa S."/>
            <person name="Nori F."/>
            <person name="Ohara O."/>
            <person name="Okazaki Y."/>
            <person name="Orlando V."/>
            <person name="Pang K.C."/>
            <person name="Pavan W.J."/>
            <person name="Pavesi G."/>
            <person name="Pesole G."/>
            <person name="Petrovsky N."/>
            <person name="Piazza S."/>
            <person name="Reed J."/>
            <person name="Reid J.F."/>
            <person name="Ring B.Z."/>
            <person name="Ringwald M."/>
            <person name="Rost B."/>
            <person name="Ruan Y."/>
            <person name="Salzberg S.L."/>
            <person name="Sandelin A."/>
            <person name="Schneider C."/>
            <person name="Schoenbach C."/>
            <person name="Sekiguchi K."/>
            <person name="Semple C.A."/>
            <person name="Seno S."/>
            <person name="Sessa L."/>
            <person name="Sheng Y."/>
            <person name="Shibata Y."/>
            <person name="Shimada H."/>
            <person name="Shimada K."/>
            <person name="Silva D."/>
            <person name="Sinclair B."/>
            <person name="Sperling S."/>
            <person name="Stupka E."/>
            <person name="Sugiura K."/>
            <person name="Sultana R."/>
            <person name="Takenaka Y."/>
            <person name="Taki K."/>
            <person name="Tammoja K."/>
            <person name="Tan S.L."/>
            <person name="Tang S."/>
            <person name="Taylor M.S."/>
            <person name="Tegner J."/>
            <person name="Teichmann S.A."/>
            <person name="Ueda H.R."/>
            <person name="van Nimwegen E."/>
            <person name="Verardo R."/>
            <person name="Wei C.L."/>
            <person name="Yagi K."/>
            <person name="Yamanishi H."/>
            <person name="Zabarovsky E."/>
            <person name="Zhu S."/>
            <person name="Zimmer A."/>
            <person name="Hide W."/>
            <person name="Bult C."/>
            <person name="Grimmond S.M."/>
            <person name="Teasdale R.D."/>
            <person name="Liu E.T."/>
            <person name="Brusic V."/>
            <person name="Quackenbush J."/>
            <person name="Wahlestedt C."/>
            <person name="Mattick J.S."/>
            <person name="Hume D.A."/>
            <person name="Kai C."/>
            <person name="Sasaki D."/>
            <person name="Tomaru Y."/>
            <person name="Fukuda S."/>
            <person name="Kanamori-Katayama M."/>
            <person name="Suzuki M."/>
            <person name="Aoki J."/>
            <person name="Arakawa T."/>
            <person name="Iida J."/>
            <person name="Imamura K."/>
            <person name="Itoh M."/>
            <person name="Kato T."/>
            <person name="Kawaji H."/>
            <person name="Kawagashira N."/>
            <person name="Kawashima T."/>
            <person name="Kojima M."/>
            <person name="Kondo S."/>
            <person name="Konno H."/>
            <person name="Nakano K."/>
            <person name="Ninomiya N."/>
            <person name="Nishio T."/>
            <person name="Okada M."/>
            <person name="Plessy C."/>
            <person name="Shibata K."/>
            <person name="Shiraki T."/>
            <person name="Suzuki S."/>
            <person name="Tagami M."/>
            <person name="Waki K."/>
            <person name="Watahiki A."/>
            <person name="Okamura-Oho Y."/>
            <person name="Suzuki H."/>
            <person name="Kawai J."/>
            <person name="Hayashizaki Y."/>
        </authorList>
    </citation>
    <scope>NUCLEOTIDE SEQUENCE [LARGE SCALE MRNA]</scope>
    <source>
        <strain>C57BL/6J</strain>
        <tissue>Tongue</tissue>
    </source>
</reference>
<protein>
    <recommendedName>
        <fullName>Ankyrin repeat and SOCS box protein 12</fullName>
        <shortName>ASB-12</shortName>
    </recommendedName>
</protein>
<comment type="function">
    <text evidence="1">Probable substrate-recognition component of a SCF-like ECS (Elongin-Cullin-SOCS-box protein) E3 ubiquitin-protein ligase complex which mediates the ubiquitination and subsequent proteasomal degradation of target proteins.</text>
</comment>
<comment type="pathway">
    <text>Protein modification; protein ubiquitination.</text>
</comment>
<comment type="subunit">
    <text evidence="1">Interacts with CUL5 and RNF7.</text>
</comment>
<comment type="domain">
    <text evidence="1">The SOCS box domain mediates the interaction with the Elongin BC complex, an adapter module in different E3 ubiquitin-protein ligase complexes.</text>
</comment>
<comment type="similarity">
    <text evidence="2">Belongs to the ankyrin SOCS box (ASB) family.</text>
</comment>
<evidence type="ECO:0000250" key="1"/>
<evidence type="ECO:0000305" key="2"/>
<feature type="chain" id="PRO_0000066948" description="Ankyrin repeat and SOCS box protein 12">
    <location>
        <begin position="1"/>
        <end position="308"/>
    </location>
</feature>
<feature type="repeat" description="ANK 1">
    <location>
        <begin position="63"/>
        <end position="92"/>
    </location>
</feature>
<feature type="repeat" description="ANK 2">
    <location>
        <begin position="96"/>
        <end position="125"/>
    </location>
</feature>
<feature type="repeat" description="ANK 3">
    <location>
        <begin position="129"/>
        <end position="158"/>
    </location>
</feature>
<feature type="repeat" description="ANK 4">
    <location>
        <begin position="171"/>
        <end position="200"/>
    </location>
</feature>
<feature type="repeat" description="ANK 5">
    <location>
        <begin position="213"/>
        <end position="243"/>
    </location>
</feature>
<feature type="domain" description="SOCS box">
    <location>
        <begin position="268"/>
        <end position="308"/>
    </location>
</feature>
<gene>
    <name type="primary">Asb12</name>
</gene>
<organism>
    <name type="scientific">Mus musculus</name>
    <name type="common">Mouse</name>
    <dbReference type="NCBI Taxonomy" id="10090"/>
    <lineage>
        <taxon>Eukaryota</taxon>
        <taxon>Metazoa</taxon>
        <taxon>Chordata</taxon>
        <taxon>Craniata</taxon>
        <taxon>Vertebrata</taxon>
        <taxon>Euteleostomi</taxon>
        <taxon>Mammalia</taxon>
        <taxon>Eutheria</taxon>
        <taxon>Euarchontoglires</taxon>
        <taxon>Glires</taxon>
        <taxon>Rodentia</taxon>
        <taxon>Myomorpha</taxon>
        <taxon>Muroidea</taxon>
        <taxon>Muridae</taxon>
        <taxon>Murinae</taxon>
        <taxon>Mus</taxon>
        <taxon>Mus</taxon>
    </lineage>
</organism>
<name>ASB12_MOUSE</name>
<dbReference type="EMBL" id="AK009644">
    <property type="protein sequence ID" value="BAB26410.1"/>
    <property type="molecule type" value="mRNA"/>
</dbReference>
<dbReference type="EMBL" id="AF403040">
    <property type="protein sequence ID" value="AAL57359.1"/>
    <property type="molecule type" value="mRNA"/>
</dbReference>
<dbReference type="CCDS" id="CCDS30283.1"/>
<dbReference type="RefSeq" id="NP_001300672.1">
    <property type="nucleotide sequence ID" value="NM_001313743.1"/>
</dbReference>
<dbReference type="RefSeq" id="NP_543134.1">
    <property type="nucleotide sequence ID" value="NM_080858.3"/>
</dbReference>
<dbReference type="RefSeq" id="XP_011245976.1">
    <property type="nucleotide sequence ID" value="XM_011247674.4"/>
</dbReference>
<dbReference type="SMR" id="Q9D738"/>
<dbReference type="BioGRID" id="214021">
    <property type="interactions" value="3"/>
</dbReference>
<dbReference type="FunCoup" id="Q9D738">
    <property type="interactions" value="25"/>
</dbReference>
<dbReference type="IntAct" id="Q9D738">
    <property type="interactions" value="3"/>
</dbReference>
<dbReference type="STRING" id="10090.ENSMUSP00000033549"/>
<dbReference type="PhosphoSitePlus" id="Q9D738"/>
<dbReference type="PaxDb" id="10090-ENSMUSP00000033549"/>
<dbReference type="ProteomicsDB" id="277245"/>
<dbReference type="Antibodypedia" id="27045">
    <property type="antibodies" value="56 antibodies from 13 providers"/>
</dbReference>
<dbReference type="DNASU" id="70392"/>
<dbReference type="Ensembl" id="ENSMUST00000033549.3">
    <property type="protein sequence ID" value="ENSMUSP00000033549.3"/>
    <property type="gene ID" value="ENSMUSG00000031204.4"/>
</dbReference>
<dbReference type="GeneID" id="70392"/>
<dbReference type="KEGG" id="mmu:70392"/>
<dbReference type="UCSC" id="uc009tty.1">
    <property type="organism name" value="mouse"/>
</dbReference>
<dbReference type="AGR" id="MGI:1917642"/>
<dbReference type="CTD" id="142689"/>
<dbReference type="MGI" id="MGI:1917642">
    <property type="gene designation" value="Asb12"/>
</dbReference>
<dbReference type="VEuPathDB" id="HostDB:ENSMUSG00000031204"/>
<dbReference type="eggNOG" id="KOG0504">
    <property type="taxonomic scope" value="Eukaryota"/>
</dbReference>
<dbReference type="GeneTree" id="ENSGT00940000153902"/>
<dbReference type="HOGENOM" id="CLU_053981_1_0_1"/>
<dbReference type="InParanoid" id="Q9D738"/>
<dbReference type="OMA" id="DYNCTDR"/>
<dbReference type="OrthoDB" id="539213at2759"/>
<dbReference type="PhylomeDB" id="Q9D738"/>
<dbReference type="TreeFam" id="TF331945"/>
<dbReference type="Reactome" id="R-MMU-8951664">
    <property type="pathway name" value="Neddylation"/>
</dbReference>
<dbReference type="Reactome" id="R-MMU-983168">
    <property type="pathway name" value="Antigen processing: Ubiquitination &amp; Proteasome degradation"/>
</dbReference>
<dbReference type="UniPathway" id="UPA00143"/>
<dbReference type="BioGRID-ORCS" id="70392">
    <property type="hits" value="1 hit in 79 CRISPR screens"/>
</dbReference>
<dbReference type="ChiTaRS" id="Asb12">
    <property type="organism name" value="mouse"/>
</dbReference>
<dbReference type="PRO" id="PR:Q9D738"/>
<dbReference type="Proteomes" id="UP000000589">
    <property type="component" value="Chromosome X"/>
</dbReference>
<dbReference type="RNAct" id="Q9D738">
    <property type="molecule type" value="protein"/>
</dbReference>
<dbReference type="Bgee" id="ENSMUSG00000031204">
    <property type="expression patterns" value="Expressed in temporalis muscle and 62 other cell types or tissues"/>
</dbReference>
<dbReference type="ExpressionAtlas" id="Q9D738">
    <property type="expression patterns" value="baseline and differential"/>
</dbReference>
<dbReference type="GO" id="GO:0000151">
    <property type="term" value="C:ubiquitin ligase complex"/>
    <property type="evidence" value="ECO:0007669"/>
    <property type="project" value="Ensembl"/>
</dbReference>
<dbReference type="GO" id="GO:0061630">
    <property type="term" value="F:ubiquitin protein ligase activity"/>
    <property type="evidence" value="ECO:0007669"/>
    <property type="project" value="Ensembl"/>
</dbReference>
<dbReference type="GO" id="GO:0016567">
    <property type="term" value="P:protein ubiquitination"/>
    <property type="evidence" value="ECO:0007669"/>
    <property type="project" value="UniProtKB-UniPathway"/>
</dbReference>
<dbReference type="FunFam" id="1.25.40.20:FF:000096">
    <property type="entry name" value="Ankyrin repeat and SOCS box containing 12"/>
    <property type="match status" value="1"/>
</dbReference>
<dbReference type="Gene3D" id="1.25.40.20">
    <property type="entry name" value="Ankyrin repeat-containing domain"/>
    <property type="match status" value="1"/>
</dbReference>
<dbReference type="InterPro" id="IPR002110">
    <property type="entry name" value="Ankyrin_rpt"/>
</dbReference>
<dbReference type="InterPro" id="IPR036770">
    <property type="entry name" value="Ankyrin_rpt-contain_sf"/>
</dbReference>
<dbReference type="InterPro" id="IPR001496">
    <property type="entry name" value="SOCS_box"/>
</dbReference>
<dbReference type="PANTHER" id="PTHR24161">
    <property type="entry name" value="ANK_REP_REGION DOMAIN-CONTAINING PROTEIN-RELATED"/>
    <property type="match status" value="1"/>
</dbReference>
<dbReference type="PANTHER" id="PTHR24161:SF85">
    <property type="entry name" value="PALMITOYLTRANSFERASE HIP14"/>
    <property type="match status" value="1"/>
</dbReference>
<dbReference type="Pfam" id="PF00023">
    <property type="entry name" value="Ank"/>
    <property type="match status" value="1"/>
</dbReference>
<dbReference type="Pfam" id="PF12796">
    <property type="entry name" value="Ank_2"/>
    <property type="match status" value="1"/>
</dbReference>
<dbReference type="Pfam" id="PF07525">
    <property type="entry name" value="SOCS_box"/>
    <property type="match status" value="1"/>
</dbReference>
<dbReference type="SMART" id="SM00248">
    <property type="entry name" value="ANK"/>
    <property type="match status" value="5"/>
</dbReference>
<dbReference type="SMART" id="SM00969">
    <property type="entry name" value="SOCS_box"/>
    <property type="match status" value="1"/>
</dbReference>
<dbReference type="SUPFAM" id="SSF48403">
    <property type="entry name" value="Ankyrin repeat"/>
    <property type="match status" value="1"/>
</dbReference>
<dbReference type="PROSITE" id="PS50297">
    <property type="entry name" value="ANK_REP_REGION"/>
    <property type="match status" value="1"/>
</dbReference>
<dbReference type="PROSITE" id="PS50088">
    <property type="entry name" value="ANK_REPEAT"/>
    <property type="match status" value="3"/>
</dbReference>
<sequence>MNLMDIAKIFSLLQPEKEEEDTGTGEKQALNQAVYDNDSCTLDHLLHQERYKRFINSRSGWGIPGTPLRLAASYGHLNCVKVLLEHGADVDSLDVKAQTPLFTAVSHGHLECVRMLLEAGACPSGSIYNNCSPVLTASRDGAFAILQELLGHGAEANVKAKLPVWASNIASCSGPLYLAAVYGHLDCFRLLLLYGADPDYNCTDQGLLSRVPQPRTLLEICLHHNCEPEYIQLLIDFGANIYLPSLPVDPTSQDDKGIKLLLQARATPRSLLSQTRLVIRRSLCRANQSQATDQLDIPPVLISYLKHQ</sequence>
<keyword id="KW-0040">ANK repeat</keyword>
<keyword id="KW-1185">Reference proteome</keyword>
<keyword id="KW-0677">Repeat</keyword>
<keyword id="KW-0833">Ubl conjugation pathway</keyword>
<proteinExistence type="evidence at transcript level"/>
<accession>Q9D738</accession>